<evidence type="ECO:0000255" key="1">
    <source>
        <dbReference type="HAMAP-Rule" id="MF_00001"/>
    </source>
</evidence>
<protein>
    <recommendedName>
        <fullName evidence="1">Aspartate carbamoyltransferase catalytic subunit</fullName>
        <ecNumber evidence="1">2.1.3.2</ecNumber>
    </recommendedName>
    <alternativeName>
        <fullName evidence="1">Aspartate transcarbamylase</fullName>
        <shortName evidence="1">ATCase</shortName>
    </alternativeName>
</protein>
<gene>
    <name evidence="1" type="primary">pyrB</name>
    <name type="ordered locus">RALTA_A2394</name>
</gene>
<sequence>MTKTFRNPQLTKNGELKHLLSIEGLSRDMITHILDTASQFVSLSDSDRDVKKVPLLRGKSVFNLFFENSTRTRTTFEIAAKRLSADVLNLNINASSTSKGESLLDTINNLSAMSADMFVVRHASSGAPYLIAEHVAPHVHVINAGDGRHAHPTQGLLDMYTIRHFKKDFTNLTVAIVGDILHSRVARSDIHALTTLGVPEVRAIGPRTLLPSGLEQMGVRVFHSMEEGLKGVDVVIMLRLQNERMSGALLPSAQEYFKAYGLTPERLALAKPDAIVMHPGPMNRGVEIDSAVADGAQSVILNQVTFGIAVRMAVMGIVAGNND</sequence>
<dbReference type="EC" id="2.1.3.2" evidence="1"/>
<dbReference type="EMBL" id="CU633749">
    <property type="protein sequence ID" value="CAQ70328.1"/>
    <property type="molecule type" value="Genomic_DNA"/>
</dbReference>
<dbReference type="RefSeq" id="WP_012353628.1">
    <property type="nucleotide sequence ID" value="NC_010528.1"/>
</dbReference>
<dbReference type="SMR" id="B3R5Y0"/>
<dbReference type="GeneID" id="29760856"/>
<dbReference type="KEGG" id="cti:RALTA_A2394"/>
<dbReference type="eggNOG" id="COG0540">
    <property type="taxonomic scope" value="Bacteria"/>
</dbReference>
<dbReference type="HOGENOM" id="CLU_043846_2_0_4"/>
<dbReference type="BioCyc" id="CTAI977880:RALTA_RS11635-MONOMER"/>
<dbReference type="UniPathway" id="UPA00070">
    <property type="reaction ID" value="UER00116"/>
</dbReference>
<dbReference type="Proteomes" id="UP000001692">
    <property type="component" value="Chromosome 1"/>
</dbReference>
<dbReference type="GO" id="GO:0005829">
    <property type="term" value="C:cytosol"/>
    <property type="evidence" value="ECO:0007669"/>
    <property type="project" value="TreeGrafter"/>
</dbReference>
<dbReference type="GO" id="GO:0016597">
    <property type="term" value="F:amino acid binding"/>
    <property type="evidence" value="ECO:0007669"/>
    <property type="project" value="InterPro"/>
</dbReference>
<dbReference type="GO" id="GO:0004070">
    <property type="term" value="F:aspartate carbamoyltransferase activity"/>
    <property type="evidence" value="ECO:0007669"/>
    <property type="project" value="UniProtKB-UniRule"/>
</dbReference>
<dbReference type="GO" id="GO:0006207">
    <property type="term" value="P:'de novo' pyrimidine nucleobase biosynthetic process"/>
    <property type="evidence" value="ECO:0007669"/>
    <property type="project" value="InterPro"/>
</dbReference>
<dbReference type="GO" id="GO:0044205">
    <property type="term" value="P:'de novo' UMP biosynthetic process"/>
    <property type="evidence" value="ECO:0007669"/>
    <property type="project" value="UniProtKB-UniRule"/>
</dbReference>
<dbReference type="GO" id="GO:0006520">
    <property type="term" value="P:amino acid metabolic process"/>
    <property type="evidence" value="ECO:0007669"/>
    <property type="project" value="InterPro"/>
</dbReference>
<dbReference type="FunFam" id="3.40.50.1370:FF:000007">
    <property type="entry name" value="Aspartate carbamoyltransferase"/>
    <property type="match status" value="1"/>
</dbReference>
<dbReference type="Gene3D" id="3.40.50.1370">
    <property type="entry name" value="Aspartate/ornithine carbamoyltransferase"/>
    <property type="match status" value="2"/>
</dbReference>
<dbReference type="HAMAP" id="MF_00001">
    <property type="entry name" value="Asp_carb_tr"/>
    <property type="match status" value="1"/>
</dbReference>
<dbReference type="InterPro" id="IPR006132">
    <property type="entry name" value="Asp/Orn_carbamoyltranf_P-bd"/>
</dbReference>
<dbReference type="InterPro" id="IPR006130">
    <property type="entry name" value="Asp/Orn_carbamoylTrfase"/>
</dbReference>
<dbReference type="InterPro" id="IPR036901">
    <property type="entry name" value="Asp/Orn_carbamoylTrfase_sf"/>
</dbReference>
<dbReference type="InterPro" id="IPR002082">
    <property type="entry name" value="Asp_carbamoyltransf"/>
</dbReference>
<dbReference type="InterPro" id="IPR006131">
    <property type="entry name" value="Asp_carbamoyltransf_Asp/Orn-bd"/>
</dbReference>
<dbReference type="NCBIfam" id="TIGR00670">
    <property type="entry name" value="asp_carb_tr"/>
    <property type="match status" value="1"/>
</dbReference>
<dbReference type="NCBIfam" id="NF002032">
    <property type="entry name" value="PRK00856.1"/>
    <property type="match status" value="1"/>
</dbReference>
<dbReference type="PANTHER" id="PTHR45753:SF6">
    <property type="entry name" value="ASPARTATE CARBAMOYLTRANSFERASE"/>
    <property type="match status" value="1"/>
</dbReference>
<dbReference type="PANTHER" id="PTHR45753">
    <property type="entry name" value="ORNITHINE CARBAMOYLTRANSFERASE, MITOCHONDRIAL"/>
    <property type="match status" value="1"/>
</dbReference>
<dbReference type="Pfam" id="PF00185">
    <property type="entry name" value="OTCace"/>
    <property type="match status" value="1"/>
</dbReference>
<dbReference type="Pfam" id="PF02729">
    <property type="entry name" value="OTCace_N"/>
    <property type="match status" value="1"/>
</dbReference>
<dbReference type="PRINTS" id="PR00100">
    <property type="entry name" value="AOTCASE"/>
</dbReference>
<dbReference type="PRINTS" id="PR00101">
    <property type="entry name" value="ATCASE"/>
</dbReference>
<dbReference type="SUPFAM" id="SSF53671">
    <property type="entry name" value="Aspartate/ornithine carbamoyltransferase"/>
    <property type="match status" value="1"/>
</dbReference>
<dbReference type="PROSITE" id="PS00097">
    <property type="entry name" value="CARBAMOYLTRANSFERASE"/>
    <property type="match status" value="1"/>
</dbReference>
<feature type="chain" id="PRO_1000088757" description="Aspartate carbamoyltransferase catalytic subunit">
    <location>
        <begin position="1"/>
        <end position="323"/>
    </location>
</feature>
<feature type="binding site" evidence="1">
    <location>
        <position position="71"/>
    </location>
    <ligand>
        <name>carbamoyl phosphate</name>
        <dbReference type="ChEBI" id="CHEBI:58228"/>
    </ligand>
</feature>
<feature type="binding site" evidence="1">
    <location>
        <position position="72"/>
    </location>
    <ligand>
        <name>carbamoyl phosphate</name>
        <dbReference type="ChEBI" id="CHEBI:58228"/>
    </ligand>
</feature>
<feature type="binding site" evidence="1">
    <location>
        <position position="99"/>
    </location>
    <ligand>
        <name>L-aspartate</name>
        <dbReference type="ChEBI" id="CHEBI:29991"/>
    </ligand>
</feature>
<feature type="binding site" evidence="1">
    <location>
        <position position="121"/>
    </location>
    <ligand>
        <name>carbamoyl phosphate</name>
        <dbReference type="ChEBI" id="CHEBI:58228"/>
    </ligand>
</feature>
<feature type="binding site" evidence="1">
    <location>
        <position position="151"/>
    </location>
    <ligand>
        <name>carbamoyl phosphate</name>
        <dbReference type="ChEBI" id="CHEBI:58228"/>
    </ligand>
</feature>
<feature type="binding site" evidence="1">
    <location>
        <position position="154"/>
    </location>
    <ligand>
        <name>carbamoyl phosphate</name>
        <dbReference type="ChEBI" id="CHEBI:58228"/>
    </ligand>
</feature>
<feature type="binding site" evidence="1">
    <location>
        <position position="184"/>
    </location>
    <ligand>
        <name>L-aspartate</name>
        <dbReference type="ChEBI" id="CHEBI:29991"/>
    </ligand>
</feature>
<feature type="binding site" evidence="1">
    <location>
        <position position="239"/>
    </location>
    <ligand>
        <name>L-aspartate</name>
        <dbReference type="ChEBI" id="CHEBI:29991"/>
    </ligand>
</feature>
<feature type="binding site" evidence="1">
    <location>
        <position position="280"/>
    </location>
    <ligand>
        <name>carbamoyl phosphate</name>
        <dbReference type="ChEBI" id="CHEBI:58228"/>
    </ligand>
</feature>
<feature type="binding site" evidence="1">
    <location>
        <position position="281"/>
    </location>
    <ligand>
        <name>carbamoyl phosphate</name>
        <dbReference type="ChEBI" id="CHEBI:58228"/>
    </ligand>
</feature>
<reference key="1">
    <citation type="journal article" date="2008" name="Genome Res.">
        <title>Genome sequence of the beta-rhizobium Cupriavidus taiwanensis and comparative genomics of rhizobia.</title>
        <authorList>
            <person name="Amadou C."/>
            <person name="Pascal G."/>
            <person name="Mangenot S."/>
            <person name="Glew M."/>
            <person name="Bontemps C."/>
            <person name="Capela D."/>
            <person name="Carrere S."/>
            <person name="Cruveiller S."/>
            <person name="Dossat C."/>
            <person name="Lajus A."/>
            <person name="Marchetti M."/>
            <person name="Poinsot V."/>
            <person name="Rouy Z."/>
            <person name="Servin B."/>
            <person name="Saad M."/>
            <person name="Schenowitz C."/>
            <person name="Barbe V."/>
            <person name="Batut J."/>
            <person name="Medigue C."/>
            <person name="Masson-Boivin C."/>
        </authorList>
    </citation>
    <scope>NUCLEOTIDE SEQUENCE [LARGE SCALE GENOMIC DNA]</scope>
    <source>
        <strain>DSM 17343 / BCRC 17206 / CCUG 44338 / CIP 107171 / LMG 19424 / R1</strain>
    </source>
</reference>
<proteinExistence type="inferred from homology"/>
<accession>B3R5Y0</accession>
<keyword id="KW-0665">Pyrimidine biosynthesis</keyword>
<keyword id="KW-0808">Transferase</keyword>
<comment type="function">
    <text evidence="1">Catalyzes the condensation of carbamoyl phosphate and aspartate to form carbamoyl aspartate and inorganic phosphate, the committed step in the de novo pyrimidine nucleotide biosynthesis pathway.</text>
</comment>
<comment type="catalytic activity">
    <reaction evidence="1">
        <text>carbamoyl phosphate + L-aspartate = N-carbamoyl-L-aspartate + phosphate + H(+)</text>
        <dbReference type="Rhea" id="RHEA:20013"/>
        <dbReference type="ChEBI" id="CHEBI:15378"/>
        <dbReference type="ChEBI" id="CHEBI:29991"/>
        <dbReference type="ChEBI" id="CHEBI:32814"/>
        <dbReference type="ChEBI" id="CHEBI:43474"/>
        <dbReference type="ChEBI" id="CHEBI:58228"/>
        <dbReference type="EC" id="2.1.3.2"/>
    </reaction>
</comment>
<comment type="pathway">
    <text evidence="1">Pyrimidine metabolism; UMP biosynthesis via de novo pathway; (S)-dihydroorotate from bicarbonate: step 2/3.</text>
</comment>
<comment type="subunit">
    <text evidence="1">Heterododecamer (2C3:3R2) of six catalytic PyrB chains organized as two trimers (C3), and six regulatory PyrI chains organized as three dimers (R2).</text>
</comment>
<comment type="similarity">
    <text evidence="1">Belongs to the aspartate/ornithine carbamoyltransferase superfamily. ATCase family.</text>
</comment>
<name>PYRB_CUPTR</name>
<organism>
    <name type="scientific">Cupriavidus taiwanensis (strain DSM 17343 / BCRC 17206 / CCUG 44338 / CIP 107171 / LMG 19424 / R1)</name>
    <name type="common">Ralstonia taiwanensis (strain LMG 19424)</name>
    <dbReference type="NCBI Taxonomy" id="977880"/>
    <lineage>
        <taxon>Bacteria</taxon>
        <taxon>Pseudomonadati</taxon>
        <taxon>Pseudomonadota</taxon>
        <taxon>Betaproteobacteria</taxon>
        <taxon>Burkholderiales</taxon>
        <taxon>Burkholderiaceae</taxon>
        <taxon>Cupriavidus</taxon>
    </lineage>
</organism>